<dbReference type="EMBL" id="CP001287">
    <property type="protein sequence ID" value="ACK64345.1"/>
    <property type="molecule type" value="Genomic_DNA"/>
</dbReference>
<dbReference type="RefSeq" id="WP_012593622.1">
    <property type="nucleotide sequence ID" value="NC_011726.1"/>
</dbReference>
<dbReference type="SMR" id="B7K238"/>
<dbReference type="STRING" id="41431.PCC8801_0242"/>
<dbReference type="KEGG" id="cyp:PCC8801_0242"/>
<dbReference type="eggNOG" id="COG0093">
    <property type="taxonomic scope" value="Bacteria"/>
</dbReference>
<dbReference type="HOGENOM" id="CLU_095071_2_1_3"/>
<dbReference type="OrthoDB" id="9806379at2"/>
<dbReference type="Proteomes" id="UP000008204">
    <property type="component" value="Chromosome"/>
</dbReference>
<dbReference type="GO" id="GO:0022625">
    <property type="term" value="C:cytosolic large ribosomal subunit"/>
    <property type="evidence" value="ECO:0007669"/>
    <property type="project" value="TreeGrafter"/>
</dbReference>
<dbReference type="GO" id="GO:0070180">
    <property type="term" value="F:large ribosomal subunit rRNA binding"/>
    <property type="evidence" value="ECO:0007669"/>
    <property type="project" value="TreeGrafter"/>
</dbReference>
<dbReference type="GO" id="GO:0003735">
    <property type="term" value="F:structural constituent of ribosome"/>
    <property type="evidence" value="ECO:0007669"/>
    <property type="project" value="InterPro"/>
</dbReference>
<dbReference type="GO" id="GO:0006412">
    <property type="term" value="P:translation"/>
    <property type="evidence" value="ECO:0007669"/>
    <property type="project" value="UniProtKB-UniRule"/>
</dbReference>
<dbReference type="CDD" id="cd00337">
    <property type="entry name" value="Ribosomal_uL14"/>
    <property type="match status" value="1"/>
</dbReference>
<dbReference type="FunFam" id="2.40.150.20:FF:000001">
    <property type="entry name" value="50S ribosomal protein L14"/>
    <property type="match status" value="1"/>
</dbReference>
<dbReference type="Gene3D" id="2.40.150.20">
    <property type="entry name" value="Ribosomal protein L14"/>
    <property type="match status" value="1"/>
</dbReference>
<dbReference type="HAMAP" id="MF_01367">
    <property type="entry name" value="Ribosomal_uL14"/>
    <property type="match status" value="1"/>
</dbReference>
<dbReference type="InterPro" id="IPR000218">
    <property type="entry name" value="Ribosomal_uL14"/>
</dbReference>
<dbReference type="InterPro" id="IPR005745">
    <property type="entry name" value="Ribosomal_uL14_bac-type"/>
</dbReference>
<dbReference type="InterPro" id="IPR019972">
    <property type="entry name" value="Ribosomal_uL14_CS"/>
</dbReference>
<dbReference type="InterPro" id="IPR036853">
    <property type="entry name" value="Ribosomal_uL14_sf"/>
</dbReference>
<dbReference type="NCBIfam" id="TIGR01067">
    <property type="entry name" value="rplN_bact"/>
    <property type="match status" value="1"/>
</dbReference>
<dbReference type="PANTHER" id="PTHR11761">
    <property type="entry name" value="50S/60S RIBOSOMAL PROTEIN L14/L23"/>
    <property type="match status" value="1"/>
</dbReference>
<dbReference type="PANTHER" id="PTHR11761:SF3">
    <property type="entry name" value="LARGE RIBOSOMAL SUBUNIT PROTEIN UL14M"/>
    <property type="match status" value="1"/>
</dbReference>
<dbReference type="Pfam" id="PF00238">
    <property type="entry name" value="Ribosomal_L14"/>
    <property type="match status" value="1"/>
</dbReference>
<dbReference type="SMART" id="SM01374">
    <property type="entry name" value="Ribosomal_L14"/>
    <property type="match status" value="1"/>
</dbReference>
<dbReference type="SUPFAM" id="SSF50193">
    <property type="entry name" value="Ribosomal protein L14"/>
    <property type="match status" value="1"/>
</dbReference>
<dbReference type="PROSITE" id="PS00049">
    <property type="entry name" value="RIBOSOMAL_L14"/>
    <property type="match status" value="1"/>
</dbReference>
<comment type="function">
    <text evidence="1">Binds to 23S rRNA. Forms part of two intersubunit bridges in the 70S ribosome.</text>
</comment>
<comment type="subunit">
    <text evidence="1">Part of the 50S ribosomal subunit. Forms a cluster with proteins L3 and L19. In the 70S ribosome, L14 and L19 interact and together make contacts with the 16S rRNA in bridges B5 and B8.</text>
</comment>
<comment type="similarity">
    <text evidence="1">Belongs to the universal ribosomal protein uL14 family.</text>
</comment>
<proteinExistence type="inferred from homology"/>
<keyword id="KW-1185">Reference proteome</keyword>
<keyword id="KW-0687">Ribonucleoprotein</keyword>
<keyword id="KW-0689">Ribosomal protein</keyword>
<keyword id="KW-0694">RNA-binding</keyword>
<keyword id="KW-0699">rRNA-binding</keyword>
<reference key="1">
    <citation type="journal article" date="2011" name="MBio">
        <title>Novel metabolic attributes of the genus Cyanothece, comprising a group of unicellular nitrogen-fixing Cyanobacteria.</title>
        <authorList>
            <person name="Bandyopadhyay A."/>
            <person name="Elvitigala T."/>
            <person name="Welsh E."/>
            <person name="Stockel J."/>
            <person name="Liberton M."/>
            <person name="Min H."/>
            <person name="Sherman L.A."/>
            <person name="Pakrasi H.B."/>
        </authorList>
    </citation>
    <scope>NUCLEOTIDE SEQUENCE [LARGE SCALE GENOMIC DNA]</scope>
    <source>
        <strain>PCC 8801 / RF-1</strain>
    </source>
</reference>
<sequence>MIQQQTYLNVADNSGARKLMCLRVLGTGNCRYGEIGDVIIAVVKDAIPNMPIKRSEIVRAVIVRTRQPVRRASGMSIRFDDNAAVIINNDGNPKGTRVFGPVARELRDKNYTKIVSLAPEVL</sequence>
<protein>
    <recommendedName>
        <fullName evidence="1">Large ribosomal subunit protein uL14</fullName>
    </recommendedName>
    <alternativeName>
        <fullName evidence="2">50S ribosomal protein L14</fullName>
    </alternativeName>
</protein>
<gene>
    <name evidence="1" type="primary">rplN</name>
    <name evidence="1" type="synonym">rpl14</name>
    <name type="ordered locus">PCC8801_0242</name>
</gene>
<organism>
    <name type="scientific">Rippkaea orientalis (strain PCC 8801 / RF-1)</name>
    <name type="common">Cyanothece sp. (strain PCC 8801)</name>
    <dbReference type="NCBI Taxonomy" id="41431"/>
    <lineage>
        <taxon>Bacteria</taxon>
        <taxon>Bacillati</taxon>
        <taxon>Cyanobacteriota</taxon>
        <taxon>Cyanophyceae</taxon>
        <taxon>Oscillatoriophycideae</taxon>
        <taxon>Chroococcales</taxon>
        <taxon>Aphanothecaceae</taxon>
        <taxon>Rippkaea</taxon>
        <taxon>Rippkaea orientalis</taxon>
    </lineage>
</organism>
<accession>B7K238</accession>
<name>RL14_RIPO1</name>
<feature type="chain" id="PRO_1000144254" description="Large ribosomal subunit protein uL14">
    <location>
        <begin position="1"/>
        <end position="122"/>
    </location>
</feature>
<evidence type="ECO:0000255" key="1">
    <source>
        <dbReference type="HAMAP-Rule" id="MF_01367"/>
    </source>
</evidence>
<evidence type="ECO:0000305" key="2"/>